<comment type="developmental stage">
    <text>Primarily expressed in amastigotes.</text>
</comment>
<comment type="similarity">
    <text evidence="3 4 5">Belongs to the peptidase C1 family.</text>
</comment>
<sequence length="443" mass="47728">MATSRAALCAVAVVCVVLAAACAPARAIHVGTPAAALFEEFKRTYGRAYETLAEEQQRLANFERNLELMREHQARNPHAQFGITKFFDLSEAEFAARYLNGAAYFAAAKRHAAQHYRKARADLSAVPDAVDWREKGAVTPVKDQGACGSCWAFSAVGNIEGQWYLAGHELVSLSEQQLVSCDDMNDGCDGGLMLQAFDWLLQNTNGHLHTEDSYPYVSGNGYVPECSNSSELVVGAQIDGHVLIGSSEKAMAAWLAKNGPIAIALDASSFMSYKSGVLTACIGKQLNHGVLLVGYDMTGEVPYWVIKNSWGGDWGEQGYVRVVMGVNACLLSEYPVSAHVRESAAPGTSTSSETPAPRPVMVEQVICFDKNCTQGCRKTLIKANECHKNGGGGASMIKCSPQKVTMCTYSNEFCVGGGLCFETPDGKCAPYFLGSIMNTCHYT</sequence>
<organism>
    <name type="scientific">Leishmania mexicana</name>
    <dbReference type="NCBI Taxonomy" id="5665"/>
    <lineage>
        <taxon>Eukaryota</taxon>
        <taxon>Discoba</taxon>
        <taxon>Euglenozoa</taxon>
        <taxon>Kinetoplastea</taxon>
        <taxon>Metakinetoplastina</taxon>
        <taxon>Trypanosomatida</taxon>
        <taxon>Trypanosomatidae</taxon>
        <taxon>Leishmaniinae</taxon>
        <taxon>Leishmania</taxon>
    </lineage>
</organism>
<accession>P36400</accession>
<keyword id="KW-0002">3D-structure</keyword>
<keyword id="KW-1015">Disulfide bond</keyword>
<keyword id="KW-0325">Glycoprotein</keyword>
<keyword id="KW-0378">Hydrolase</keyword>
<keyword id="KW-0645">Protease</keyword>
<keyword id="KW-0732">Signal</keyword>
<keyword id="KW-0788">Thiol protease</keyword>
<keyword id="KW-0865">Zymogen</keyword>
<name>LMCPB_LEIME</name>
<protein>
    <recommendedName>
        <fullName>Cysteine proteinase B</fullName>
        <ecNumber>3.4.22.-</ecNumber>
    </recommendedName>
</protein>
<evidence type="ECO:0000250" key="1"/>
<evidence type="ECO:0000255" key="2"/>
<evidence type="ECO:0000255" key="3">
    <source>
        <dbReference type="PROSITE-ProRule" id="PRU10088"/>
    </source>
</evidence>
<evidence type="ECO:0000255" key="4">
    <source>
        <dbReference type="PROSITE-ProRule" id="PRU10089"/>
    </source>
</evidence>
<evidence type="ECO:0000255" key="5">
    <source>
        <dbReference type="PROSITE-ProRule" id="PRU10090"/>
    </source>
</evidence>
<evidence type="ECO:0000305" key="6"/>
<evidence type="ECO:0007829" key="7">
    <source>
        <dbReference type="PDB" id="6P4E"/>
    </source>
</evidence>
<gene>
    <name type="primary">LMCPB</name>
    <name type="synonym">LMCPB2.8</name>
</gene>
<proteinExistence type="evidence at protein level"/>
<feature type="signal peptide" evidence="2">
    <location>
        <begin position="1"/>
        <end position="27"/>
    </location>
</feature>
<feature type="propeptide" id="PRO_0000026382" description="Activation peptide" evidence="6">
    <location>
        <begin position="28"/>
        <end position="125"/>
    </location>
</feature>
<feature type="chain" id="PRO_0000026383" description="Cysteine proteinase B">
    <location>
        <begin position="126"/>
        <end position="443"/>
    </location>
</feature>
<feature type="active site" evidence="1">
    <location>
        <position position="150"/>
    </location>
</feature>
<feature type="active site" evidence="1">
    <location>
        <position position="288"/>
    </location>
</feature>
<feature type="active site" evidence="1">
    <location>
        <position position="308"/>
    </location>
</feature>
<feature type="glycosylation site" description="N-linked (GlcNAc...) asparagine" evidence="2">
    <location>
        <position position="228"/>
    </location>
</feature>
<feature type="disulfide bond" evidence="1">
    <location>
        <begin position="147"/>
        <end position="188"/>
    </location>
</feature>
<feature type="disulfide bond" evidence="1">
    <location>
        <begin position="181"/>
        <end position="226"/>
    </location>
</feature>
<feature type="disulfide bond" evidence="1">
    <location>
        <begin position="281"/>
        <end position="329"/>
    </location>
</feature>
<feature type="sequence conflict" description="In Ref. 1; CAA78443." evidence="6" ref="1">
    <original>ND</original>
    <variation>DN</variation>
    <location>
        <begin position="185"/>
        <end position="186"/>
    </location>
</feature>
<feature type="sequence conflict" description="In Ref. 1; CAA78443." evidence="6" ref="1">
    <original>D</original>
    <variation>S</variation>
    <location>
        <position position="189"/>
    </location>
</feature>
<feature type="sequence conflict" description="In Ref. 1; CAA78443." evidence="6" ref="1">
    <original>M</original>
    <variation>V</variation>
    <location>
        <position position="361"/>
    </location>
</feature>
<feature type="sequence conflict" description="In Ref. 1; CAA78443." evidence="6" ref="1">
    <original>TQ</original>
    <variation>RR</variation>
    <location>
        <begin position="373"/>
        <end position="374"/>
    </location>
</feature>
<feature type="sequence conflict" description="In Ref. 1; CAA78443." evidence="6" ref="1">
    <original>P</original>
    <variation>H</variation>
    <location>
        <position position="424"/>
    </location>
</feature>
<feature type="sequence conflict" description="In Ref. 1; CAA78443." evidence="6" ref="1">
    <original>A</original>
    <variation>S</variation>
    <location>
        <position position="429"/>
    </location>
</feature>
<feature type="sequence conflict" description="In Ref. 1; CAA78443." evidence="6" ref="1">
    <original>L</original>
    <variation>F</variation>
    <location>
        <position position="433"/>
    </location>
</feature>
<feature type="strand" evidence="7">
    <location>
        <begin position="128"/>
        <end position="131"/>
    </location>
</feature>
<feature type="turn" evidence="7">
    <location>
        <begin position="132"/>
        <end position="136"/>
    </location>
</feature>
<feature type="helix" evidence="7">
    <location>
        <begin position="150"/>
        <end position="165"/>
    </location>
</feature>
<feature type="helix" evidence="7">
    <location>
        <begin position="175"/>
        <end position="181"/>
    </location>
</feature>
<feature type="strand" evidence="7">
    <location>
        <begin position="183"/>
        <end position="186"/>
    </location>
</feature>
<feature type="turn" evidence="7">
    <location>
        <begin position="187"/>
        <end position="189"/>
    </location>
</feature>
<feature type="helix" evidence="7">
    <location>
        <begin position="193"/>
        <end position="203"/>
    </location>
</feature>
<feature type="strand" evidence="7">
    <location>
        <begin position="207"/>
        <end position="210"/>
    </location>
</feature>
<feature type="turn" evidence="7">
    <location>
        <begin position="211"/>
        <end position="213"/>
    </location>
</feature>
<feature type="strand" evidence="7">
    <location>
        <begin position="234"/>
        <end position="237"/>
    </location>
</feature>
<feature type="strand" evidence="7">
    <location>
        <begin position="240"/>
        <end position="244"/>
    </location>
</feature>
<feature type="helix" evidence="7">
    <location>
        <begin position="248"/>
        <end position="258"/>
    </location>
</feature>
<feature type="strand" evidence="7">
    <location>
        <begin position="261"/>
        <end position="265"/>
    </location>
</feature>
<feature type="helix" evidence="7">
    <location>
        <begin position="268"/>
        <end position="270"/>
    </location>
</feature>
<feature type="strand" evidence="7">
    <location>
        <begin position="275"/>
        <end position="278"/>
    </location>
</feature>
<feature type="strand" evidence="7">
    <location>
        <begin position="288"/>
        <end position="296"/>
    </location>
</feature>
<feature type="strand" evidence="7">
    <location>
        <begin position="298"/>
        <end position="301"/>
    </location>
</feature>
<feature type="strand" evidence="7">
    <location>
        <begin position="303"/>
        <end position="307"/>
    </location>
</feature>
<feature type="strand" evidence="7">
    <location>
        <begin position="319"/>
        <end position="326"/>
    </location>
</feature>
<feature type="helix" evidence="7">
    <location>
        <begin position="328"/>
        <end position="330"/>
    </location>
</feature>
<feature type="strand" evidence="7">
    <location>
        <begin position="335"/>
        <end position="339"/>
    </location>
</feature>
<reference key="1">
    <citation type="journal article" date="1992" name="FEBS Lett.">
        <title>Characterization of a multi-copy gene for a major stage-specific cysteine proteinase of Leishmania mexicana.</title>
        <authorList>
            <person name="Souza A.E."/>
            <person name="Waugh S."/>
            <person name="Coombs G.H."/>
            <person name="Mottram J.C."/>
        </authorList>
    </citation>
    <scope>NUCLEOTIDE SEQUENCE [MRNA]</scope>
    <source>
        <strain>MNYC/BZ/62/M379</strain>
    </source>
</reference>
<reference key="2">
    <citation type="journal article" date="1997" name="J. Biol. Chem.">
        <title>The multiple cpb cysteine proteinase genes of Leishmania mexicana encode isoenzymes that differ in their stage regulation and substrate preferences.</title>
        <authorList>
            <person name="Mottram J.C."/>
            <person name="Frame M.J."/>
            <person name="Brooks D.R."/>
            <person name="Tetley L."/>
            <person name="Hutchison J.E."/>
            <person name="Souza A.E."/>
            <person name="Coombs G.H."/>
        </authorList>
    </citation>
    <scope>NUCLEOTIDE SEQUENCE</scope>
    <source>
        <strain>MNYC/BZ/62/M379</strain>
    </source>
</reference>
<dbReference type="EC" id="3.4.22.-"/>
<dbReference type="EMBL" id="Z14061">
    <property type="protein sequence ID" value="CAA78443.1"/>
    <property type="molecule type" value="mRNA"/>
</dbReference>
<dbReference type="EMBL" id="Z49962">
    <property type="protein sequence ID" value="CAA90236.1"/>
    <property type="molecule type" value="Genomic_DNA"/>
</dbReference>
<dbReference type="PIR" id="S29245">
    <property type="entry name" value="S29245"/>
</dbReference>
<dbReference type="PDB" id="6P4E">
    <property type="method" value="X-ray"/>
    <property type="resolution" value="1.35 A"/>
    <property type="chains" value="A/B=125-341"/>
</dbReference>
<dbReference type="PDBsum" id="6P4E"/>
<dbReference type="SMR" id="P36400"/>
<dbReference type="BindingDB" id="P36400"/>
<dbReference type="ChEMBL" id="CHEMBL3821"/>
<dbReference type="MEROPS" id="C01.074"/>
<dbReference type="GlyCosmos" id="P36400">
    <property type="glycosylation" value="1 site, No reported glycans"/>
</dbReference>
<dbReference type="VEuPathDB" id="TriTrypDB:LmxM.08.1030a"/>
<dbReference type="BRENDA" id="3.4.22.B5">
    <property type="organism ID" value="2951"/>
</dbReference>
<dbReference type="SABIO-RK" id="P36400"/>
<dbReference type="PHI-base" id="PHI:6330"/>
<dbReference type="GO" id="GO:0004197">
    <property type="term" value="F:cysteine-type endopeptidase activity"/>
    <property type="evidence" value="ECO:0007669"/>
    <property type="project" value="InterPro"/>
</dbReference>
<dbReference type="GO" id="GO:0006508">
    <property type="term" value="P:proteolysis"/>
    <property type="evidence" value="ECO:0007669"/>
    <property type="project" value="UniProtKB-KW"/>
</dbReference>
<dbReference type="CDD" id="cd02248">
    <property type="entry name" value="Peptidase_C1A"/>
    <property type="match status" value="1"/>
</dbReference>
<dbReference type="FunFam" id="3.90.70.10:FF:000212">
    <property type="entry name" value="Cathepsin L-like protease"/>
    <property type="match status" value="1"/>
</dbReference>
<dbReference type="Gene3D" id="3.90.70.10">
    <property type="entry name" value="Cysteine proteinases"/>
    <property type="match status" value="1"/>
</dbReference>
<dbReference type="InterPro" id="IPR021981">
    <property type="entry name" value="DUF3586"/>
</dbReference>
<dbReference type="InterPro" id="IPR038765">
    <property type="entry name" value="Papain-like_cys_pep_sf"/>
</dbReference>
<dbReference type="InterPro" id="IPR025661">
    <property type="entry name" value="Pept_asp_AS"/>
</dbReference>
<dbReference type="InterPro" id="IPR000169">
    <property type="entry name" value="Pept_cys_AS"/>
</dbReference>
<dbReference type="InterPro" id="IPR025660">
    <property type="entry name" value="Pept_his_AS"/>
</dbReference>
<dbReference type="InterPro" id="IPR013128">
    <property type="entry name" value="Peptidase_C1A"/>
</dbReference>
<dbReference type="InterPro" id="IPR000668">
    <property type="entry name" value="Peptidase_C1A_C"/>
</dbReference>
<dbReference type="InterPro" id="IPR039417">
    <property type="entry name" value="Peptidase_C1A_papain-like"/>
</dbReference>
<dbReference type="InterPro" id="IPR013201">
    <property type="entry name" value="Prot_inhib_I29"/>
</dbReference>
<dbReference type="PANTHER" id="PTHR12411">
    <property type="entry name" value="CYSTEINE PROTEASE FAMILY C1-RELATED"/>
    <property type="match status" value="1"/>
</dbReference>
<dbReference type="Pfam" id="PF12131">
    <property type="entry name" value="DUF3586"/>
    <property type="match status" value="1"/>
</dbReference>
<dbReference type="Pfam" id="PF08246">
    <property type="entry name" value="Inhibitor_I29"/>
    <property type="match status" value="1"/>
</dbReference>
<dbReference type="Pfam" id="PF00112">
    <property type="entry name" value="Peptidase_C1"/>
    <property type="match status" value="1"/>
</dbReference>
<dbReference type="PRINTS" id="PR00705">
    <property type="entry name" value="PAPAIN"/>
</dbReference>
<dbReference type="SMART" id="SM00848">
    <property type="entry name" value="Inhibitor_I29"/>
    <property type="match status" value="1"/>
</dbReference>
<dbReference type="SMART" id="SM00645">
    <property type="entry name" value="Pept_C1"/>
    <property type="match status" value="1"/>
</dbReference>
<dbReference type="SUPFAM" id="SSF54001">
    <property type="entry name" value="Cysteine proteinases"/>
    <property type="match status" value="1"/>
</dbReference>
<dbReference type="PROSITE" id="PS00640">
    <property type="entry name" value="THIOL_PROTEASE_ASN"/>
    <property type="match status" value="1"/>
</dbReference>
<dbReference type="PROSITE" id="PS00139">
    <property type="entry name" value="THIOL_PROTEASE_CYS"/>
    <property type="match status" value="1"/>
</dbReference>
<dbReference type="PROSITE" id="PS00639">
    <property type="entry name" value="THIOL_PROTEASE_HIS"/>
    <property type="match status" value="1"/>
</dbReference>